<gene>
    <name evidence="1" type="primary">glmM</name>
    <name type="ordered locus">Mlg_1973</name>
</gene>
<name>GLMM_ALKEH</name>
<reference key="1">
    <citation type="submission" date="2006-08" db="EMBL/GenBank/DDBJ databases">
        <title>Complete sequence of Alkalilimnicola ehrilichei MLHE-1.</title>
        <authorList>
            <person name="Copeland A."/>
            <person name="Lucas S."/>
            <person name="Lapidus A."/>
            <person name="Barry K."/>
            <person name="Detter J.C."/>
            <person name="Glavina del Rio T."/>
            <person name="Hammon N."/>
            <person name="Israni S."/>
            <person name="Dalin E."/>
            <person name="Tice H."/>
            <person name="Pitluck S."/>
            <person name="Sims D."/>
            <person name="Brettin T."/>
            <person name="Bruce D."/>
            <person name="Han C."/>
            <person name="Tapia R."/>
            <person name="Gilna P."/>
            <person name="Schmutz J."/>
            <person name="Larimer F."/>
            <person name="Land M."/>
            <person name="Hauser L."/>
            <person name="Kyrpides N."/>
            <person name="Mikhailova N."/>
            <person name="Oremland R.S."/>
            <person name="Hoeft S.E."/>
            <person name="Switzer-Blum J."/>
            <person name="Kulp T."/>
            <person name="King G."/>
            <person name="Tabita R."/>
            <person name="Witte B."/>
            <person name="Santini J.M."/>
            <person name="Basu P."/>
            <person name="Hollibaugh J.T."/>
            <person name="Xie G."/>
            <person name="Stolz J.F."/>
            <person name="Richardson P."/>
        </authorList>
    </citation>
    <scope>NUCLEOTIDE SEQUENCE [LARGE SCALE GENOMIC DNA]</scope>
    <source>
        <strain>ATCC BAA-1101 / DSM 17681 / MLHE-1</strain>
    </source>
</reference>
<feature type="chain" id="PRO_0000301273" description="Phosphoglucosamine mutase">
    <location>
        <begin position="1"/>
        <end position="451"/>
    </location>
</feature>
<feature type="active site" description="Phosphoserine intermediate" evidence="1">
    <location>
        <position position="101"/>
    </location>
</feature>
<feature type="binding site" description="via phosphate group" evidence="1">
    <location>
        <position position="101"/>
    </location>
    <ligand>
        <name>Mg(2+)</name>
        <dbReference type="ChEBI" id="CHEBI:18420"/>
    </ligand>
</feature>
<feature type="binding site" evidence="1">
    <location>
        <position position="240"/>
    </location>
    <ligand>
        <name>Mg(2+)</name>
        <dbReference type="ChEBI" id="CHEBI:18420"/>
    </ligand>
</feature>
<feature type="binding site" evidence="1">
    <location>
        <position position="242"/>
    </location>
    <ligand>
        <name>Mg(2+)</name>
        <dbReference type="ChEBI" id="CHEBI:18420"/>
    </ligand>
</feature>
<feature type="binding site" evidence="1">
    <location>
        <position position="244"/>
    </location>
    <ligand>
        <name>Mg(2+)</name>
        <dbReference type="ChEBI" id="CHEBI:18420"/>
    </ligand>
</feature>
<feature type="modified residue" description="Phosphoserine" evidence="1">
    <location>
        <position position="101"/>
    </location>
</feature>
<evidence type="ECO:0000255" key="1">
    <source>
        <dbReference type="HAMAP-Rule" id="MF_01554"/>
    </source>
</evidence>
<comment type="function">
    <text evidence="1">Catalyzes the conversion of glucosamine-6-phosphate to glucosamine-1-phosphate.</text>
</comment>
<comment type="catalytic activity">
    <reaction evidence="1">
        <text>alpha-D-glucosamine 1-phosphate = D-glucosamine 6-phosphate</text>
        <dbReference type="Rhea" id="RHEA:23424"/>
        <dbReference type="ChEBI" id="CHEBI:58516"/>
        <dbReference type="ChEBI" id="CHEBI:58725"/>
        <dbReference type="EC" id="5.4.2.10"/>
    </reaction>
</comment>
<comment type="cofactor">
    <cofactor evidence="1">
        <name>Mg(2+)</name>
        <dbReference type="ChEBI" id="CHEBI:18420"/>
    </cofactor>
    <text evidence="1">Binds 1 Mg(2+) ion per subunit.</text>
</comment>
<comment type="PTM">
    <text evidence="1">Activated by phosphorylation.</text>
</comment>
<comment type="similarity">
    <text evidence="1">Belongs to the phosphohexose mutase family.</text>
</comment>
<organism>
    <name type="scientific">Alkalilimnicola ehrlichii (strain ATCC BAA-1101 / DSM 17681 / MLHE-1)</name>
    <dbReference type="NCBI Taxonomy" id="187272"/>
    <lineage>
        <taxon>Bacteria</taxon>
        <taxon>Pseudomonadati</taxon>
        <taxon>Pseudomonadota</taxon>
        <taxon>Gammaproteobacteria</taxon>
        <taxon>Chromatiales</taxon>
        <taxon>Ectothiorhodospiraceae</taxon>
        <taxon>Alkalilimnicola</taxon>
    </lineage>
</organism>
<dbReference type="EC" id="5.4.2.10" evidence="1"/>
<dbReference type="EMBL" id="CP000453">
    <property type="protein sequence ID" value="ABI57315.1"/>
    <property type="molecule type" value="Genomic_DNA"/>
</dbReference>
<dbReference type="RefSeq" id="WP_011629709.1">
    <property type="nucleotide sequence ID" value="NC_008340.1"/>
</dbReference>
<dbReference type="SMR" id="Q0A772"/>
<dbReference type="KEGG" id="aeh:Mlg_1973"/>
<dbReference type="eggNOG" id="COG1109">
    <property type="taxonomic scope" value="Bacteria"/>
</dbReference>
<dbReference type="HOGENOM" id="CLU_016950_7_0_6"/>
<dbReference type="OrthoDB" id="9803322at2"/>
<dbReference type="Proteomes" id="UP000001962">
    <property type="component" value="Chromosome"/>
</dbReference>
<dbReference type="GO" id="GO:0005829">
    <property type="term" value="C:cytosol"/>
    <property type="evidence" value="ECO:0007669"/>
    <property type="project" value="TreeGrafter"/>
</dbReference>
<dbReference type="GO" id="GO:0000287">
    <property type="term" value="F:magnesium ion binding"/>
    <property type="evidence" value="ECO:0007669"/>
    <property type="project" value="UniProtKB-UniRule"/>
</dbReference>
<dbReference type="GO" id="GO:0008966">
    <property type="term" value="F:phosphoglucosamine mutase activity"/>
    <property type="evidence" value="ECO:0007669"/>
    <property type="project" value="UniProtKB-UniRule"/>
</dbReference>
<dbReference type="GO" id="GO:0004615">
    <property type="term" value="F:phosphomannomutase activity"/>
    <property type="evidence" value="ECO:0007669"/>
    <property type="project" value="TreeGrafter"/>
</dbReference>
<dbReference type="GO" id="GO:0005975">
    <property type="term" value="P:carbohydrate metabolic process"/>
    <property type="evidence" value="ECO:0007669"/>
    <property type="project" value="InterPro"/>
</dbReference>
<dbReference type="GO" id="GO:0009252">
    <property type="term" value="P:peptidoglycan biosynthetic process"/>
    <property type="evidence" value="ECO:0007669"/>
    <property type="project" value="TreeGrafter"/>
</dbReference>
<dbReference type="GO" id="GO:0006048">
    <property type="term" value="P:UDP-N-acetylglucosamine biosynthetic process"/>
    <property type="evidence" value="ECO:0007669"/>
    <property type="project" value="TreeGrafter"/>
</dbReference>
<dbReference type="CDD" id="cd05802">
    <property type="entry name" value="GlmM"/>
    <property type="match status" value="1"/>
</dbReference>
<dbReference type="FunFam" id="3.30.310.50:FF:000001">
    <property type="entry name" value="Phosphoglucosamine mutase"/>
    <property type="match status" value="1"/>
</dbReference>
<dbReference type="FunFam" id="3.40.120.10:FF:000001">
    <property type="entry name" value="Phosphoglucosamine mutase"/>
    <property type="match status" value="1"/>
</dbReference>
<dbReference type="FunFam" id="3.40.120.10:FF:000003">
    <property type="entry name" value="Phosphoglucosamine mutase"/>
    <property type="match status" value="1"/>
</dbReference>
<dbReference type="Gene3D" id="3.40.120.10">
    <property type="entry name" value="Alpha-D-Glucose-1,6-Bisphosphate, subunit A, domain 3"/>
    <property type="match status" value="3"/>
</dbReference>
<dbReference type="Gene3D" id="3.30.310.50">
    <property type="entry name" value="Alpha-D-phosphohexomutase, C-terminal domain"/>
    <property type="match status" value="1"/>
</dbReference>
<dbReference type="HAMAP" id="MF_01554_B">
    <property type="entry name" value="GlmM_B"/>
    <property type="match status" value="1"/>
</dbReference>
<dbReference type="InterPro" id="IPR005844">
    <property type="entry name" value="A-D-PHexomutase_a/b/a-I"/>
</dbReference>
<dbReference type="InterPro" id="IPR016055">
    <property type="entry name" value="A-D-PHexomutase_a/b/a-I/II/III"/>
</dbReference>
<dbReference type="InterPro" id="IPR005845">
    <property type="entry name" value="A-D-PHexomutase_a/b/a-II"/>
</dbReference>
<dbReference type="InterPro" id="IPR005846">
    <property type="entry name" value="A-D-PHexomutase_a/b/a-III"/>
</dbReference>
<dbReference type="InterPro" id="IPR005843">
    <property type="entry name" value="A-D-PHexomutase_C"/>
</dbReference>
<dbReference type="InterPro" id="IPR036900">
    <property type="entry name" value="A-D-PHexomutase_C_sf"/>
</dbReference>
<dbReference type="InterPro" id="IPR016066">
    <property type="entry name" value="A-D-PHexomutase_CS"/>
</dbReference>
<dbReference type="InterPro" id="IPR005841">
    <property type="entry name" value="Alpha-D-phosphohexomutase_SF"/>
</dbReference>
<dbReference type="InterPro" id="IPR006352">
    <property type="entry name" value="GlmM_bact"/>
</dbReference>
<dbReference type="InterPro" id="IPR050060">
    <property type="entry name" value="Phosphoglucosamine_mutase"/>
</dbReference>
<dbReference type="NCBIfam" id="TIGR01455">
    <property type="entry name" value="glmM"/>
    <property type="match status" value="1"/>
</dbReference>
<dbReference type="NCBIfam" id="NF008139">
    <property type="entry name" value="PRK10887.1"/>
    <property type="match status" value="1"/>
</dbReference>
<dbReference type="PANTHER" id="PTHR42946:SF1">
    <property type="entry name" value="PHOSPHOGLUCOMUTASE (ALPHA-D-GLUCOSE-1,6-BISPHOSPHATE-DEPENDENT)"/>
    <property type="match status" value="1"/>
</dbReference>
<dbReference type="PANTHER" id="PTHR42946">
    <property type="entry name" value="PHOSPHOHEXOSE MUTASE"/>
    <property type="match status" value="1"/>
</dbReference>
<dbReference type="Pfam" id="PF02878">
    <property type="entry name" value="PGM_PMM_I"/>
    <property type="match status" value="1"/>
</dbReference>
<dbReference type="Pfam" id="PF02879">
    <property type="entry name" value="PGM_PMM_II"/>
    <property type="match status" value="1"/>
</dbReference>
<dbReference type="Pfam" id="PF02880">
    <property type="entry name" value="PGM_PMM_III"/>
    <property type="match status" value="1"/>
</dbReference>
<dbReference type="Pfam" id="PF00408">
    <property type="entry name" value="PGM_PMM_IV"/>
    <property type="match status" value="1"/>
</dbReference>
<dbReference type="PRINTS" id="PR00509">
    <property type="entry name" value="PGMPMM"/>
</dbReference>
<dbReference type="SUPFAM" id="SSF55957">
    <property type="entry name" value="Phosphoglucomutase, C-terminal domain"/>
    <property type="match status" value="1"/>
</dbReference>
<dbReference type="SUPFAM" id="SSF53738">
    <property type="entry name" value="Phosphoglucomutase, first 3 domains"/>
    <property type="match status" value="3"/>
</dbReference>
<dbReference type="PROSITE" id="PS00710">
    <property type="entry name" value="PGM_PMM"/>
    <property type="match status" value="1"/>
</dbReference>
<sequence length="451" mass="47692">MKKEYFGTDGIRGTVGEPPITPDFMLHLGWAAGRVLARAGQSSVLVGKDTRISGYMLESALESGFAAAGVNVKLLGPMPTPAIAYLTRTLRAAAGVVISASHNPHEDNGIKFFSDDGEKLDDATELAIEAELRQPLKPAPSARLGKASRINDAPGRYIEFCKRSFPYELSLRGLRLVVDCANGATYHVAPAVFHELGAEVIPLADDPDGLNINADCGSLHPKGLQAAVREHDADAGIAFDGDGDRVIMVDHRGEVVDGDGLLYIIARQRMANGGLAGPVVGTVMSNLGLEQGIGRLGLPFLRAKVGDRYVMEMLRREGGILGGESSGHLICLDRTTTGDGIVSALQVLEAMAAQERTLAELADGMDRLPQIMVNVPISRGVPVQDHATVTDAVRDAETRLAGRGRVLLRPSGTEPVLRVMVEGPDQAEVSATAEAIAGAVREAHATLTAPR</sequence>
<accession>Q0A772</accession>
<keyword id="KW-0413">Isomerase</keyword>
<keyword id="KW-0460">Magnesium</keyword>
<keyword id="KW-0479">Metal-binding</keyword>
<keyword id="KW-0597">Phosphoprotein</keyword>
<keyword id="KW-1185">Reference proteome</keyword>
<protein>
    <recommendedName>
        <fullName evidence="1">Phosphoglucosamine mutase</fullName>
        <ecNumber evidence="1">5.4.2.10</ecNumber>
    </recommendedName>
</protein>
<proteinExistence type="inferred from homology"/>